<protein>
    <recommendedName>
        <fullName evidence="1">Aliphatic sulfonates import ATP-binding protein SsuB 2</fullName>
        <ecNumber evidence="1">7.6.2.14</ecNumber>
    </recommendedName>
</protein>
<gene>
    <name evidence="1" type="primary">ssuB2</name>
    <name type="ordered locus">XAC3196</name>
</gene>
<keyword id="KW-0067">ATP-binding</keyword>
<keyword id="KW-0997">Cell inner membrane</keyword>
<keyword id="KW-1003">Cell membrane</keyword>
<keyword id="KW-0472">Membrane</keyword>
<keyword id="KW-0547">Nucleotide-binding</keyword>
<keyword id="KW-1278">Translocase</keyword>
<keyword id="KW-0813">Transport</keyword>
<name>SSUB2_XANAC</name>
<evidence type="ECO:0000255" key="1">
    <source>
        <dbReference type="HAMAP-Rule" id="MF_01724"/>
    </source>
</evidence>
<evidence type="ECO:0000256" key="2">
    <source>
        <dbReference type="SAM" id="MobiDB-lite"/>
    </source>
</evidence>
<dbReference type="EC" id="7.6.2.14" evidence="1"/>
<dbReference type="EMBL" id="AE008923">
    <property type="protein sequence ID" value="AAM38040.1"/>
    <property type="molecule type" value="Genomic_DNA"/>
</dbReference>
<dbReference type="SMR" id="Q8PHQ3"/>
<dbReference type="KEGG" id="xac:XAC3196"/>
<dbReference type="eggNOG" id="COG1116">
    <property type="taxonomic scope" value="Bacteria"/>
</dbReference>
<dbReference type="HOGENOM" id="CLU_000604_1_22_6"/>
<dbReference type="Proteomes" id="UP000000576">
    <property type="component" value="Chromosome"/>
</dbReference>
<dbReference type="GO" id="GO:0005886">
    <property type="term" value="C:plasma membrane"/>
    <property type="evidence" value="ECO:0007669"/>
    <property type="project" value="UniProtKB-SubCell"/>
</dbReference>
<dbReference type="GO" id="GO:0005524">
    <property type="term" value="F:ATP binding"/>
    <property type="evidence" value="ECO:0007669"/>
    <property type="project" value="UniProtKB-KW"/>
</dbReference>
<dbReference type="GO" id="GO:0016887">
    <property type="term" value="F:ATP hydrolysis activity"/>
    <property type="evidence" value="ECO:0007669"/>
    <property type="project" value="InterPro"/>
</dbReference>
<dbReference type="CDD" id="cd03293">
    <property type="entry name" value="ABC_NrtD_SsuB_transporters"/>
    <property type="match status" value="1"/>
</dbReference>
<dbReference type="Gene3D" id="3.40.50.300">
    <property type="entry name" value="P-loop containing nucleotide triphosphate hydrolases"/>
    <property type="match status" value="1"/>
</dbReference>
<dbReference type="InterPro" id="IPR003593">
    <property type="entry name" value="AAA+_ATPase"/>
</dbReference>
<dbReference type="InterPro" id="IPR003439">
    <property type="entry name" value="ABC_transporter-like_ATP-bd"/>
</dbReference>
<dbReference type="InterPro" id="IPR017871">
    <property type="entry name" value="ABC_transporter-like_CS"/>
</dbReference>
<dbReference type="InterPro" id="IPR050166">
    <property type="entry name" value="ABC_transporter_ATP-bind"/>
</dbReference>
<dbReference type="InterPro" id="IPR027417">
    <property type="entry name" value="P-loop_NTPase"/>
</dbReference>
<dbReference type="PANTHER" id="PTHR42788:SF17">
    <property type="entry name" value="ALIPHATIC SULFONATES IMPORT ATP-BINDING PROTEIN SSUB"/>
    <property type="match status" value="1"/>
</dbReference>
<dbReference type="PANTHER" id="PTHR42788">
    <property type="entry name" value="TAURINE IMPORT ATP-BINDING PROTEIN-RELATED"/>
    <property type="match status" value="1"/>
</dbReference>
<dbReference type="Pfam" id="PF00005">
    <property type="entry name" value="ABC_tran"/>
    <property type="match status" value="1"/>
</dbReference>
<dbReference type="SMART" id="SM00382">
    <property type="entry name" value="AAA"/>
    <property type="match status" value="1"/>
</dbReference>
<dbReference type="SUPFAM" id="SSF52540">
    <property type="entry name" value="P-loop containing nucleoside triphosphate hydrolases"/>
    <property type="match status" value="1"/>
</dbReference>
<dbReference type="PROSITE" id="PS00211">
    <property type="entry name" value="ABC_TRANSPORTER_1"/>
    <property type="match status" value="1"/>
</dbReference>
<dbReference type="PROSITE" id="PS50893">
    <property type="entry name" value="ABC_TRANSPORTER_2"/>
    <property type="match status" value="1"/>
</dbReference>
<dbReference type="PROSITE" id="PS51291">
    <property type="entry name" value="SSUB"/>
    <property type="match status" value="1"/>
</dbReference>
<accession>Q8PHQ3</accession>
<proteinExistence type="inferred from homology"/>
<organism>
    <name type="scientific">Xanthomonas axonopodis pv. citri (strain 306)</name>
    <dbReference type="NCBI Taxonomy" id="190486"/>
    <lineage>
        <taxon>Bacteria</taxon>
        <taxon>Pseudomonadati</taxon>
        <taxon>Pseudomonadota</taxon>
        <taxon>Gammaproteobacteria</taxon>
        <taxon>Lysobacterales</taxon>
        <taxon>Lysobacteraceae</taxon>
        <taxon>Xanthomonas</taxon>
    </lineage>
</organism>
<feature type="chain" id="PRO_0000279966" description="Aliphatic sulfonates import ATP-binding protein SsuB 2">
    <location>
        <begin position="1"/>
        <end position="291"/>
    </location>
</feature>
<feature type="domain" description="ABC transporter" evidence="1">
    <location>
        <begin position="26"/>
        <end position="247"/>
    </location>
</feature>
<feature type="region of interest" description="Disordered" evidence="2">
    <location>
        <begin position="264"/>
        <end position="291"/>
    </location>
</feature>
<feature type="compositionally biased region" description="Polar residues" evidence="2">
    <location>
        <begin position="281"/>
        <end position="291"/>
    </location>
</feature>
<feature type="binding site" evidence="1">
    <location>
        <begin position="58"/>
        <end position="65"/>
    </location>
    <ligand>
        <name>ATP</name>
        <dbReference type="ChEBI" id="CHEBI:30616"/>
    </ligand>
</feature>
<sequence length="291" mass="30483">MAGLASGATTACRATPMSAATTGLPLRVRGIAKRYGDSDVLRGIDLEIAPSACVAIVGRSGCGKSTLLRVIAGLETADVGTVDSGRAPLAAQRDAVRLMFQDARLLPWKRVIDNVALGLGRAGRAQAQQALDAVGLGTRGNAWPSALSGGQRQRVALARALVHRPRLLLLDEPLGALDALTRIEMQQLIVQLWRQHGFTLVLVTHDVAEASALADRIVVLEHGKVGLDVAVPVPHPRAPGLPALASIQAQVLSRLLGTTQVPEPAAPKAQTRHGPPRGATAQDTSPLQRIL</sequence>
<reference key="1">
    <citation type="journal article" date="2002" name="Nature">
        <title>Comparison of the genomes of two Xanthomonas pathogens with differing host specificities.</title>
        <authorList>
            <person name="da Silva A.C.R."/>
            <person name="Ferro J.A."/>
            <person name="Reinach F.C."/>
            <person name="Farah C.S."/>
            <person name="Furlan L.R."/>
            <person name="Quaggio R.B."/>
            <person name="Monteiro-Vitorello C.B."/>
            <person name="Van Sluys M.A."/>
            <person name="Almeida N.F. Jr."/>
            <person name="Alves L.M.C."/>
            <person name="do Amaral A.M."/>
            <person name="Bertolini M.C."/>
            <person name="Camargo L.E.A."/>
            <person name="Camarotte G."/>
            <person name="Cannavan F."/>
            <person name="Cardozo J."/>
            <person name="Chambergo F."/>
            <person name="Ciapina L.P."/>
            <person name="Cicarelli R.M.B."/>
            <person name="Coutinho L.L."/>
            <person name="Cursino-Santos J.R."/>
            <person name="El-Dorry H."/>
            <person name="Faria J.B."/>
            <person name="Ferreira A.J.S."/>
            <person name="Ferreira R.C.C."/>
            <person name="Ferro M.I.T."/>
            <person name="Formighieri E.F."/>
            <person name="Franco M.C."/>
            <person name="Greggio C.C."/>
            <person name="Gruber A."/>
            <person name="Katsuyama A.M."/>
            <person name="Kishi L.T."/>
            <person name="Leite R.P."/>
            <person name="Lemos E.G.M."/>
            <person name="Lemos M.V.F."/>
            <person name="Locali E.C."/>
            <person name="Machado M.A."/>
            <person name="Madeira A.M.B.N."/>
            <person name="Martinez-Rossi N.M."/>
            <person name="Martins E.C."/>
            <person name="Meidanis J."/>
            <person name="Menck C.F.M."/>
            <person name="Miyaki C.Y."/>
            <person name="Moon D.H."/>
            <person name="Moreira L.M."/>
            <person name="Novo M.T.M."/>
            <person name="Okura V.K."/>
            <person name="Oliveira M.C."/>
            <person name="Oliveira V.R."/>
            <person name="Pereira H.A."/>
            <person name="Rossi A."/>
            <person name="Sena J.A.D."/>
            <person name="Silva C."/>
            <person name="de Souza R.F."/>
            <person name="Spinola L.A.F."/>
            <person name="Takita M.A."/>
            <person name="Tamura R.E."/>
            <person name="Teixeira E.C."/>
            <person name="Tezza R.I.D."/>
            <person name="Trindade dos Santos M."/>
            <person name="Truffi D."/>
            <person name="Tsai S.M."/>
            <person name="White F.F."/>
            <person name="Setubal J.C."/>
            <person name="Kitajima J.P."/>
        </authorList>
    </citation>
    <scope>NUCLEOTIDE SEQUENCE [LARGE SCALE GENOMIC DNA]</scope>
    <source>
        <strain>306</strain>
    </source>
</reference>
<comment type="function">
    <text evidence="1">Part of the ABC transporter complex SsuABC involved in aliphatic sulfonates import. Responsible for energy coupling to the transport system.</text>
</comment>
<comment type="catalytic activity">
    <reaction evidence="1">
        <text>ATP + H2O + aliphatic sulfonate-[sulfonate-binding protein]Side 1 = ADP + phosphate + aliphatic sulfonateSide 2 + [sulfonate-binding protein]Side 1.</text>
        <dbReference type="EC" id="7.6.2.14"/>
    </reaction>
</comment>
<comment type="subunit">
    <text evidence="1">The complex is composed of two ATP-binding proteins (SsuB), two transmembrane proteins (SsuC) and a solute-binding protein (SsuA).</text>
</comment>
<comment type="subcellular location">
    <subcellularLocation>
        <location evidence="1">Cell inner membrane</location>
        <topology evidence="1">Peripheral membrane protein</topology>
    </subcellularLocation>
</comment>
<comment type="similarity">
    <text evidence="1">Belongs to the ABC transporter superfamily. Aliphatic sulfonates importer (TC 3.A.1.17.2) family.</text>
</comment>